<organism>
    <name type="scientific">Halobacterium salinarum (strain ATCC 700922 / JCM 11081 / NRC-1)</name>
    <name type="common">Halobacterium halobium</name>
    <dbReference type="NCBI Taxonomy" id="64091"/>
    <lineage>
        <taxon>Archaea</taxon>
        <taxon>Methanobacteriati</taxon>
        <taxon>Methanobacteriota</taxon>
        <taxon>Stenosarchaea group</taxon>
        <taxon>Halobacteria</taxon>
        <taxon>Halobacteriales</taxon>
        <taxon>Halobacteriaceae</taxon>
        <taxon>Halobacterium</taxon>
        <taxon>Halobacterium salinarum NRC-34001</taxon>
    </lineage>
</organism>
<sequence length="181" mass="19761">MTVEIANIVGSGDLGVELDVEPLEADLSTPYSEYDPSNYHGLYVRLEENGPLITVYRSGKYIITGCASMESLHETNEEFLGMLADLGVTEEDTQTGFTVENVVCTAMLDELVSLNALAIGLGLEVTEYEPEQFPGLVYRPEEIGAVLLVFANGKMVITGAKDTETAESAYEYFQSKVQELV</sequence>
<geneLocation type="plasmid">
    <name>pNRC100</name>
</geneLocation>
<geneLocation type="plasmid">
    <name>pNRC200</name>
</geneLocation>
<proteinExistence type="inferred from homology"/>
<dbReference type="EMBL" id="AF016485">
    <property type="protein sequence ID" value="AAC82884.1"/>
    <property type="molecule type" value="Genomic_DNA"/>
</dbReference>
<dbReference type="EMBL" id="AE004438">
    <property type="protein sequence ID" value="AAG20813.1"/>
    <property type="molecule type" value="Genomic_DNA"/>
</dbReference>
<dbReference type="PIR" id="T08317">
    <property type="entry name" value="T08317"/>
</dbReference>
<dbReference type="RefSeq" id="WP_010890481.1">
    <property type="nucleotide sequence ID" value="NZ_BK010831.1"/>
</dbReference>
<dbReference type="SMR" id="O52004"/>
<dbReference type="KEGG" id="hal:tbpC"/>
<dbReference type="KEGG" id="hal:VNG_6140G"/>
<dbReference type="PATRIC" id="fig|64091.14.peg.2173"/>
<dbReference type="HOGENOM" id="CLU_060161_4_3_2"/>
<dbReference type="InParanoid" id="O52004"/>
<dbReference type="OrthoDB" id="350539at2157"/>
<dbReference type="PhylomeDB" id="O52004"/>
<dbReference type="Proteomes" id="UP000000554">
    <property type="component" value="Plasmid pNRC100"/>
</dbReference>
<dbReference type="Proteomes" id="UP000000554">
    <property type="component" value="Plasmid pNRC200"/>
</dbReference>
<dbReference type="GO" id="GO:0003677">
    <property type="term" value="F:DNA binding"/>
    <property type="evidence" value="ECO:0007669"/>
    <property type="project" value="UniProtKB-KW"/>
</dbReference>
<dbReference type="GO" id="GO:0003700">
    <property type="term" value="F:DNA-binding transcription factor activity"/>
    <property type="evidence" value="ECO:0007669"/>
    <property type="project" value="UniProtKB-UniRule"/>
</dbReference>
<dbReference type="GO" id="GO:0140223">
    <property type="term" value="F:general transcription initiation factor activity"/>
    <property type="evidence" value="ECO:0000318"/>
    <property type="project" value="GO_Central"/>
</dbReference>
<dbReference type="GO" id="GO:0006352">
    <property type="term" value="P:DNA-templated transcription initiation"/>
    <property type="evidence" value="ECO:0000318"/>
    <property type="project" value="GO_Central"/>
</dbReference>
<dbReference type="CDD" id="cd04518">
    <property type="entry name" value="TBP_archaea"/>
    <property type="match status" value="1"/>
</dbReference>
<dbReference type="Gene3D" id="3.30.310.10">
    <property type="entry name" value="TATA-Binding Protein"/>
    <property type="match status" value="2"/>
</dbReference>
<dbReference type="HAMAP" id="MF_00408">
    <property type="entry name" value="TATA_bind_prot_arch"/>
    <property type="match status" value="1"/>
</dbReference>
<dbReference type="InterPro" id="IPR000814">
    <property type="entry name" value="TBP"/>
</dbReference>
<dbReference type="InterPro" id="IPR033711">
    <property type="entry name" value="TBP_archaea"/>
</dbReference>
<dbReference type="InterPro" id="IPR012295">
    <property type="entry name" value="TBP_dom_sf"/>
</dbReference>
<dbReference type="NCBIfam" id="NF001593">
    <property type="entry name" value="PRK00394.1-2"/>
    <property type="match status" value="1"/>
</dbReference>
<dbReference type="PANTHER" id="PTHR10126">
    <property type="entry name" value="TATA-BOX BINDING PROTEIN"/>
    <property type="match status" value="1"/>
</dbReference>
<dbReference type="Pfam" id="PF00352">
    <property type="entry name" value="TBP"/>
    <property type="match status" value="2"/>
</dbReference>
<dbReference type="PRINTS" id="PR00686">
    <property type="entry name" value="TIFACTORIID"/>
</dbReference>
<dbReference type="SUPFAM" id="SSF55945">
    <property type="entry name" value="TATA-box binding protein-like"/>
    <property type="match status" value="2"/>
</dbReference>
<name>TBPC_HALSA</name>
<feature type="chain" id="PRO_0000154001" description="TATA-box-binding protein C">
    <location>
        <begin position="1"/>
        <end position="181"/>
    </location>
</feature>
<feature type="repeat" description="1">
    <location>
        <begin position="5"/>
        <end position="83"/>
    </location>
</feature>
<feature type="repeat" description="2">
    <location>
        <begin position="99"/>
        <end position="177"/>
    </location>
</feature>
<evidence type="ECO:0000250" key="1"/>
<evidence type="ECO:0000305" key="2"/>
<reference key="1">
    <citation type="journal article" date="1998" name="Genome Res.">
        <title>Snapshot of a large dynamic replicon in a halophilic archaeon: megaplasmid or minichromosome?</title>
        <authorList>
            <person name="Ng W.V."/>
            <person name="Ciufo S.A."/>
            <person name="Smith T.M."/>
            <person name="Bumgarner R.E."/>
            <person name="Baskin D."/>
            <person name="Faust J."/>
            <person name="Hall B."/>
            <person name="Loretz C."/>
            <person name="Seto J."/>
            <person name="Slagel J."/>
            <person name="Hood L."/>
            <person name="DasSarma S."/>
        </authorList>
    </citation>
    <scope>NUCLEOTIDE SEQUENCE [LARGE SCALE GENOMIC DNA]</scope>
    <source>
        <strain>ATCC 700922 / JCM 11081 / NRC-1</strain>
        <plasmid>pNRC100</plasmid>
    </source>
</reference>
<reference key="2">
    <citation type="journal article" date="2000" name="Proc. Natl. Acad. Sci. U.S.A.">
        <title>Genome sequence of Halobacterium species NRC-1.</title>
        <authorList>
            <person name="Ng W.V."/>
            <person name="Kennedy S.P."/>
            <person name="Mahairas G.G."/>
            <person name="Berquist B."/>
            <person name="Pan M."/>
            <person name="Shukla H.D."/>
            <person name="Lasky S.R."/>
            <person name="Baliga N.S."/>
            <person name="Thorsson V."/>
            <person name="Sbrogna J."/>
            <person name="Swartzell S."/>
            <person name="Weir D."/>
            <person name="Hall J."/>
            <person name="Dahl T.A."/>
            <person name="Welti R."/>
            <person name="Goo Y.A."/>
            <person name="Leithauser B."/>
            <person name="Keller K."/>
            <person name="Cruz R."/>
            <person name="Danson M.J."/>
            <person name="Hough D.W."/>
            <person name="Maddocks D.G."/>
            <person name="Jablonski P.E."/>
            <person name="Krebs M.P."/>
            <person name="Angevine C.M."/>
            <person name="Dale H."/>
            <person name="Isenbarger T.A."/>
            <person name="Peck R.F."/>
            <person name="Pohlschroder M."/>
            <person name="Spudich J.L."/>
            <person name="Jung K.-H."/>
            <person name="Alam M."/>
            <person name="Freitas T."/>
            <person name="Hou S."/>
            <person name="Daniels C.J."/>
            <person name="Dennis P.P."/>
            <person name="Omer A.D."/>
            <person name="Ebhardt H."/>
            <person name="Lowe T.M."/>
            <person name="Liang P."/>
            <person name="Riley M."/>
            <person name="Hood L."/>
            <person name="DasSarma S."/>
        </authorList>
    </citation>
    <scope>NUCLEOTIDE SEQUENCE [LARGE SCALE GENOMIC DNA]</scope>
    <source>
        <strain>ATCC 700922 / JCM 11081 / NRC-1</strain>
        <plasmid>pNRC200</plasmid>
    </source>
</reference>
<accession>O52004</accession>
<gene>
    <name type="primary">tbpC1</name>
    <name type="ordered locus">VNG_5142G</name>
</gene>
<gene>
    <name type="primary">tbpC2</name>
    <name type="ordered locus">VNG_6140G</name>
</gene>
<keyword id="KW-0238">DNA-binding</keyword>
<keyword id="KW-0614">Plasmid</keyword>
<keyword id="KW-1185">Reference proteome</keyword>
<keyword id="KW-0677">Repeat</keyword>
<keyword id="KW-0804">Transcription</keyword>
<keyword id="KW-0805">Transcription regulation</keyword>
<comment type="function">
    <text evidence="1">General factor that plays a role in the activation of archaeal genes transcribed by RNA polymerase. Binds specifically to the TATA box promoter element which lies close to the position of transcription initiation (By similarity).</text>
</comment>
<comment type="similarity">
    <text evidence="2">Belongs to the TBP family.</text>
</comment>
<protein>
    <recommendedName>
        <fullName>TATA-box-binding protein C</fullName>
    </recommendedName>
    <alternativeName>
        <fullName>Box A-binding protein C</fullName>
        <shortName>BAP C</shortName>
    </alternativeName>
    <alternativeName>
        <fullName>TATA sequence-binding protein C</fullName>
        <shortName>TBP C</shortName>
    </alternativeName>
    <alternativeName>
        <fullName>TATA-box factor C</fullName>
    </alternativeName>
</protein>